<dbReference type="EC" id="3.4.22.-"/>
<dbReference type="EMBL" id="U72745">
    <property type="protein sequence ID" value="AAC47481.1"/>
    <property type="molecule type" value="mRNA"/>
</dbReference>
<dbReference type="EMBL" id="AAFI02000030">
    <property type="protein sequence ID" value="EAL67741.1"/>
    <property type="molecule type" value="Genomic_DNA"/>
</dbReference>
<dbReference type="RefSeq" id="XP_641725.1">
    <property type="nucleotide sequence ID" value="XM_636633.1"/>
</dbReference>
<dbReference type="SMR" id="Q94503"/>
<dbReference type="FunCoup" id="Q94503">
    <property type="interactions" value="72"/>
</dbReference>
<dbReference type="STRING" id="44689.Q94503"/>
<dbReference type="MEROPS" id="C01.081"/>
<dbReference type="GlyCosmos" id="Q94503">
    <property type="glycosylation" value="2 sites, No reported glycans"/>
</dbReference>
<dbReference type="GlyGen" id="Q94503">
    <property type="glycosylation" value="2 sites"/>
</dbReference>
<dbReference type="PaxDb" id="44689-DDB0215002"/>
<dbReference type="EnsemblProtists" id="EAL67741">
    <property type="protein sequence ID" value="EAL67741"/>
    <property type="gene ID" value="DDB_G0279185"/>
</dbReference>
<dbReference type="GeneID" id="8621921"/>
<dbReference type="KEGG" id="ddi:DDB_G0279185"/>
<dbReference type="dictyBase" id="DDB_G0279185">
    <property type="gene designation" value="cprF"/>
</dbReference>
<dbReference type="VEuPathDB" id="AmoebaDB:DDB_G0279185"/>
<dbReference type="eggNOG" id="KOG1543">
    <property type="taxonomic scope" value="Eukaryota"/>
</dbReference>
<dbReference type="HOGENOM" id="CLU_012184_1_2_1"/>
<dbReference type="InParanoid" id="Q94503"/>
<dbReference type="OMA" id="VYHEKRC"/>
<dbReference type="PhylomeDB" id="Q94503"/>
<dbReference type="Reactome" id="R-DDI-1474228">
    <property type="pathway name" value="Degradation of the extracellular matrix"/>
</dbReference>
<dbReference type="Reactome" id="R-DDI-2132295">
    <property type="pathway name" value="MHC class II antigen presentation"/>
</dbReference>
<dbReference type="Reactome" id="R-DDI-6798695">
    <property type="pathway name" value="Neutrophil degranulation"/>
</dbReference>
<dbReference type="PRO" id="PR:Q94503"/>
<dbReference type="Proteomes" id="UP000002195">
    <property type="component" value="Chromosome 3"/>
</dbReference>
<dbReference type="GO" id="GO:0005615">
    <property type="term" value="C:extracellular space"/>
    <property type="evidence" value="ECO:0000318"/>
    <property type="project" value="GO_Central"/>
</dbReference>
<dbReference type="GO" id="GO:0005764">
    <property type="term" value="C:lysosome"/>
    <property type="evidence" value="ECO:0000318"/>
    <property type="project" value="GO_Central"/>
</dbReference>
<dbReference type="GO" id="GO:0004197">
    <property type="term" value="F:cysteine-type endopeptidase activity"/>
    <property type="evidence" value="ECO:0000318"/>
    <property type="project" value="GO_Central"/>
</dbReference>
<dbReference type="GO" id="GO:0006955">
    <property type="term" value="P:immune response"/>
    <property type="evidence" value="ECO:0000318"/>
    <property type="project" value="GO_Central"/>
</dbReference>
<dbReference type="GO" id="GO:2001235">
    <property type="term" value="P:positive regulation of apoptotic signaling pathway"/>
    <property type="evidence" value="ECO:0000318"/>
    <property type="project" value="GO_Central"/>
</dbReference>
<dbReference type="GO" id="GO:0051603">
    <property type="term" value="P:proteolysis involved in protein catabolic process"/>
    <property type="evidence" value="ECO:0000318"/>
    <property type="project" value="GO_Central"/>
</dbReference>
<dbReference type="CDD" id="cd02248">
    <property type="entry name" value="Peptidase_C1A"/>
    <property type="match status" value="1"/>
</dbReference>
<dbReference type="FunFam" id="2.40.50.170:FF:000001">
    <property type="entry name" value="Cathepsin L1"/>
    <property type="match status" value="1"/>
</dbReference>
<dbReference type="FunFam" id="3.90.70.10:FF:000039">
    <property type="entry name" value="Cysteine proteinase 2, putative"/>
    <property type="match status" value="1"/>
</dbReference>
<dbReference type="Gene3D" id="1.10.287.2250">
    <property type="match status" value="1"/>
</dbReference>
<dbReference type="Gene3D" id="3.90.70.10">
    <property type="entry name" value="Cysteine proteinases"/>
    <property type="match status" value="1"/>
</dbReference>
<dbReference type="Gene3D" id="2.40.50.170">
    <property type="entry name" value="Cysteine proteinases. Chain C"/>
    <property type="match status" value="1"/>
</dbReference>
<dbReference type="InterPro" id="IPR038765">
    <property type="entry name" value="Papain-like_cys_pep_sf"/>
</dbReference>
<dbReference type="InterPro" id="IPR025661">
    <property type="entry name" value="Pept_asp_AS"/>
</dbReference>
<dbReference type="InterPro" id="IPR000169">
    <property type="entry name" value="Pept_cys_AS"/>
</dbReference>
<dbReference type="InterPro" id="IPR025660">
    <property type="entry name" value="Pept_his_AS"/>
</dbReference>
<dbReference type="InterPro" id="IPR013128">
    <property type="entry name" value="Peptidase_C1A"/>
</dbReference>
<dbReference type="InterPro" id="IPR000668">
    <property type="entry name" value="Peptidase_C1A_C"/>
</dbReference>
<dbReference type="InterPro" id="IPR039417">
    <property type="entry name" value="Peptidase_C1A_papain-like"/>
</dbReference>
<dbReference type="InterPro" id="IPR013201">
    <property type="entry name" value="Prot_inhib_I29"/>
</dbReference>
<dbReference type="PANTHER" id="PTHR12411">
    <property type="entry name" value="CYSTEINE PROTEASE FAMILY C1-RELATED"/>
    <property type="match status" value="1"/>
</dbReference>
<dbReference type="Pfam" id="PF08246">
    <property type="entry name" value="Inhibitor_I29"/>
    <property type="match status" value="1"/>
</dbReference>
<dbReference type="Pfam" id="PF00112">
    <property type="entry name" value="Peptidase_C1"/>
    <property type="match status" value="2"/>
</dbReference>
<dbReference type="PRINTS" id="PR00705">
    <property type="entry name" value="PAPAIN"/>
</dbReference>
<dbReference type="SMART" id="SM00848">
    <property type="entry name" value="Inhibitor_I29"/>
    <property type="match status" value="1"/>
</dbReference>
<dbReference type="SMART" id="SM00645">
    <property type="entry name" value="Pept_C1"/>
    <property type="match status" value="1"/>
</dbReference>
<dbReference type="SUPFAM" id="SSF54001">
    <property type="entry name" value="Cysteine proteinases"/>
    <property type="match status" value="2"/>
</dbReference>
<dbReference type="PROSITE" id="PS00640">
    <property type="entry name" value="THIOL_PROTEASE_ASN"/>
    <property type="match status" value="1"/>
</dbReference>
<dbReference type="PROSITE" id="PS00139">
    <property type="entry name" value="THIOL_PROTEASE_CYS"/>
    <property type="match status" value="1"/>
</dbReference>
<dbReference type="PROSITE" id="PS00639">
    <property type="entry name" value="THIOL_PROTEASE_HIS"/>
    <property type="match status" value="1"/>
</dbReference>
<proteinExistence type="evidence at transcript level"/>
<organism>
    <name type="scientific">Dictyostelium discoideum</name>
    <name type="common">Social amoeba</name>
    <dbReference type="NCBI Taxonomy" id="44689"/>
    <lineage>
        <taxon>Eukaryota</taxon>
        <taxon>Amoebozoa</taxon>
        <taxon>Evosea</taxon>
        <taxon>Eumycetozoa</taxon>
        <taxon>Dictyostelia</taxon>
        <taxon>Dictyosteliales</taxon>
        <taxon>Dictyosteliaceae</taxon>
        <taxon>Dictyostelium</taxon>
    </lineage>
</organism>
<accession>Q94503</accession>
<accession>Q54X52</accession>
<feature type="signal peptide" evidence="2">
    <location>
        <begin position="1"/>
        <end position="19"/>
    </location>
</feature>
<feature type="propeptide" id="PRO_0000312514" description="Activation peptide" evidence="2">
    <location>
        <begin position="20"/>
        <end position="113"/>
    </location>
</feature>
<feature type="chain" id="PRO_0000312515" description="Cysteine proteinase 6">
    <location>
        <begin position="114"/>
        <end position="434"/>
    </location>
</feature>
<feature type="region of interest" description="Disordered" evidence="6">
    <location>
        <begin position="285"/>
        <end position="384"/>
    </location>
</feature>
<feature type="compositionally biased region" description="Low complexity" evidence="6">
    <location>
        <begin position="288"/>
        <end position="347"/>
    </location>
</feature>
<feature type="compositionally biased region" description="Gly residues" evidence="6">
    <location>
        <begin position="348"/>
        <end position="358"/>
    </location>
</feature>
<feature type="compositionally biased region" description="Low complexity" evidence="6">
    <location>
        <begin position="359"/>
        <end position="381"/>
    </location>
</feature>
<feature type="active site" evidence="1">
    <location>
        <position position="136"/>
    </location>
</feature>
<feature type="active site" evidence="1">
    <location>
        <position position="276"/>
    </location>
</feature>
<feature type="active site" evidence="1">
    <location>
        <position position="394"/>
    </location>
</feature>
<feature type="glycosylation site" description="N-linked (GlcNAc...) asparagine" evidence="2">
    <location>
        <position position="227"/>
    </location>
</feature>
<feature type="glycosylation site" description="N-linked (GlcNAc...) asparagine" evidence="2">
    <location>
        <position position="305"/>
    </location>
</feature>
<feature type="disulfide bond" evidence="1">
    <location>
        <begin position="133"/>
        <end position="178"/>
    </location>
</feature>
<feature type="disulfide bond" evidence="1">
    <location>
        <begin position="169"/>
        <end position="211"/>
    </location>
</feature>
<feature type="disulfide bond" evidence="1">
    <location>
        <begin position="269"/>
        <end position="416"/>
    </location>
</feature>
<reference key="1">
    <citation type="journal article" date="1997" name="Arch. Biochem. Biophys.">
        <title>The cysteine proteinase gene cprG in Dictyostelium discoideum has a serine-rich domain that contains GlcNAc-1-P.</title>
        <authorList>
            <person name="Ord T."/>
            <person name="Adessi C."/>
            <person name="Wang L."/>
            <person name="Freeze H.H."/>
        </authorList>
    </citation>
    <scope>NUCLEOTIDE SEQUENCE [MRNA]</scope>
    <scope>DEVELOPMENTAL STAGE</scope>
    <source>
        <strain>AX2</strain>
    </source>
</reference>
<reference key="2">
    <citation type="journal article" date="2005" name="Nature">
        <title>The genome of the social amoeba Dictyostelium discoideum.</title>
        <authorList>
            <person name="Eichinger L."/>
            <person name="Pachebat J.A."/>
            <person name="Gloeckner G."/>
            <person name="Rajandream M.A."/>
            <person name="Sucgang R."/>
            <person name="Berriman M."/>
            <person name="Song J."/>
            <person name="Olsen R."/>
            <person name="Szafranski K."/>
            <person name="Xu Q."/>
            <person name="Tunggal B."/>
            <person name="Kummerfeld S."/>
            <person name="Madera M."/>
            <person name="Konfortov B.A."/>
            <person name="Rivero F."/>
            <person name="Bankier A.T."/>
            <person name="Lehmann R."/>
            <person name="Hamlin N."/>
            <person name="Davies R."/>
            <person name="Gaudet P."/>
            <person name="Fey P."/>
            <person name="Pilcher K."/>
            <person name="Chen G."/>
            <person name="Saunders D."/>
            <person name="Sodergren E.J."/>
            <person name="Davis P."/>
            <person name="Kerhornou A."/>
            <person name="Nie X."/>
            <person name="Hall N."/>
            <person name="Anjard C."/>
            <person name="Hemphill L."/>
            <person name="Bason N."/>
            <person name="Farbrother P."/>
            <person name="Desany B."/>
            <person name="Just E."/>
            <person name="Morio T."/>
            <person name="Rost R."/>
            <person name="Churcher C.M."/>
            <person name="Cooper J."/>
            <person name="Haydock S."/>
            <person name="van Driessche N."/>
            <person name="Cronin A."/>
            <person name="Goodhead I."/>
            <person name="Muzny D.M."/>
            <person name="Mourier T."/>
            <person name="Pain A."/>
            <person name="Lu M."/>
            <person name="Harper D."/>
            <person name="Lindsay R."/>
            <person name="Hauser H."/>
            <person name="James K.D."/>
            <person name="Quiles M."/>
            <person name="Madan Babu M."/>
            <person name="Saito T."/>
            <person name="Buchrieser C."/>
            <person name="Wardroper A."/>
            <person name="Felder M."/>
            <person name="Thangavelu M."/>
            <person name="Johnson D."/>
            <person name="Knights A."/>
            <person name="Loulseged H."/>
            <person name="Mungall K.L."/>
            <person name="Oliver K."/>
            <person name="Price C."/>
            <person name="Quail M.A."/>
            <person name="Urushihara H."/>
            <person name="Hernandez J."/>
            <person name="Rabbinowitsch E."/>
            <person name="Steffen D."/>
            <person name="Sanders M."/>
            <person name="Ma J."/>
            <person name="Kohara Y."/>
            <person name="Sharp S."/>
            <person name="Simmonds M.N."/>
            <person name="Spiegler S."/>
            <person name="Tivey A."/>
            <person name="Sugano S."/>
            <person name="White B."/>
            <person name="Walker D."/>
            <person name="Woodward J.R."/>
            <person name="Winckler T."/>
            <person name="Tanaka Y."/>
            <person name="Shaulsky G."/>
            <person name="Schleicher M."/>
            <person name="Weinstock G.M."/>
            <person name="Rosenthal A."/>
            <person name="Cox E.C."/>
            <person name="Chisholm R.L."/>
            <person name="Gibbs R.A."/>
            <person name="Loomis W.F."/>
            <person name="Platzer M."/>
            <person name="Kay R.R."/>
            <person name="Williams J.G."/>
            <person name="Dear P.H."/>
            <person name="Noegel A.A."/>
            <person name="Barrell B.G."/>
            <person name="Kuspa A."/>
        </authorList>
    </citation>
    <scope>NUCLEOTIDE SEQUENCE [LARGE SCALE GENOMIC DNA]</scope>
    <source>
        <strain>AX4</strain>
    </source>
</reference>
<evidence type="ECO:0000250" key="1"/>
<evidence type="ECO:0000255" key="2"/>
<evidence type="ECO:0000255" key="3">
    <source>
        <dbReference type="PROSITE-ProRule" id="PRU10088"/>
    </source>
</evidence>
<evidence type="ECO:0000255" key="4">
    <source>
        <dbReference type="PROSITE-ProRule" id="PRU10089"/>
    </source>
</evidence>
<evidence type="ECO:0000255" key="5">
    <source>
        <dbReference type="PROSITE-ProRule" id="PRU10090"/>
    </source>
</evidence>
<evidence type="ECO:0000256" key="6">
    <source>
        <dbReference type="SAM" id="MobiDB-lite"/>
    </source>
</evidence>
<evidence type="ECO:0000269" key="7">
    <source>
    </source>
</evidence>
<evidence type="ECO:0000305" key="8"/>
<gene>
    <name type="primary">cprF</name>
    <name type="synonym">CP6</name>
    <name type="ORF">DDB_G0279185</name>
</gene>
<protein>
    <recommendedName>
        <fullName>Cysteine proteinase 6</fullName>
        <ecNumber>3.4.22.-</ecNumber>
    </recommendedName>
</protein>
<keyword id="KW-1015">Disulfide bond</keyword>
<keyword id="KW-0325">Glycoprotein</keyword>
<keyword id="KW-0378">Hydrolase</keyword>
<keyword id="KW-0458">Lysosome</keyword>
<keyword id="KW-0597">Phosphoprotein</keyword>
<keyword id="KW-0645">Protease</keyword>
<keyword id="KW-1185">Reference proteome</keyword>
<keyword id="KW-0732">Signal</keyword>
<keyword id="KW-0788">Thiol protease</keyword>
<keyword id="KW-0865">Zymogen</keyword>
<sequence>MKVLSALCVLLVSVATAKQQLSELQYRNAFTNWMIAHQRHYSSEEFNGRFNIFKANMDYINEWNTKGSETVLGLNVFADITNEEYRATYLGTPFDASSLEMTPSEKVFGGVQANSVDWRAKGAVTPIKNQGECGGCWSFSATGATEGAQYIANGDSDLTSVSEQQLIDCSGSYGNNGCEGGLMTLAFEYIINNGGIDTESSYPFTANTEKCKYNPSNIGAELSSYVNVTSGSESDLAAKVTQGPTSVAIDASQPSFQFYSSGIYNEPACSSTQLDHGVLAVGFGSGSSGSQSQSAGSQSQSSNNNWSESSQSQDSNSWSQSSQSQSSQDSNSWSQSSQSQGSNSFTGAGTGSGSGSVSGSGSASGSSSFSGSSNGGNSNSGDYPTDGNYWIVKNSWGLDWGINGYILMSKDKDNQCGIATMASIPQAIPKSKWN</sequence>
<comment type="subcellular location">
    <subcellularLocation>
        <location evidence="8">Lysosome</location>
    </subcellularLocation>
</comment>
<comment type="developmental stage">
    <text evidence="7">Present in the vegetative phase and decreases with the start development.</text>
</comment>
<comment type="similarity">
    <text evidence="3 4 5">Belongs to the peptidase C1 family.</text>
</comment>
<name>CYSP6_DICDI</name>